<name>SYA_PARS2</name>
<accession>A8LCW4</accession>
<feature type="chain" id="PRO_0000347619" description="Alanine--tRNA ligase">
    <location>
        <begin position="1"/>
        <end position="880"/>
    </location>
</feature>
<feature type="binding site" evidence="1">
    <location>
        <position position="566"/>
    </location>
    <ligand>
        <name>Zn(2+)</name>
        <dbReference type="ChEBI" id="CHEBI:29105"/>
    </ligand>
</feature>
<feature type="binding site" evidence="1">
    <location>
        <position position="570"/>
    </location>
    <ligand>
        <name>Zn(2+)</name>
        <dbReference type="ChEBI" id="CHEBI:29105"/>
    </ligand>
</feature>
<feature type="binding site" evidence="1">
    <location>
        <position position="668"/>
    </location>
    <ligand>
        <name>Zn(2+)</name>
        <dbReference type="ChEBI" id="CHEBI:29105"/>
    </ligand>
</feature>
<feature type="binding site" evidence="1">
    <location>
        <position position="672"/>
    </location>
    <ligand>
        <name>Zn(2+)</name>
        <dbReference type="ChEBI" id="CHEBI:29105"/>
    </ligand>
</feature>
<reference key="1">
    <citation type="journal article" date="2007" name="Genome Res.">
        <title>Genome characteristics of facultatively symbiotic Frankia sp. strains reflect host range and host plant biogeography.</title>
        <authorList>
            <person name="Normand P."/>
            <person name="Lapierre P."/>
            <person name="Tisa L.S."/>
            <person name="Gogarten J.P."/>
            <person name="Alloisio N."/>
            <person name="Bagnarol E."/>
            <person name="Bassi C.A."/>
            <person name="Berry A.M."/>
            <person name="Bickhart D.M."/>
            <person name="Choisne N."/>
            <person name="Couloux A."/>
            <person name="Cournoyer B."/>
            <person name="Cruveiller S."/>
            <person name="Daubin V."/>
            <person name="Demange N."/>
            <person name="Francino M.P."/>
            <person name="Goltsman E."/>
            <person name="Huang Y."/>
            <person name="Kopp O.R."/>
            <person name="Labarre L."/>
            <person name="Lapidus A."/>
            <person name="Lavire C."/>
            <person name="Marechal J."/>
            <person name="Martinez M."/>
            <person name="Mastronunzio J.E."/>
            <person name="Mullin B.C."/>
            <person name="Niemann J."/>
            <person name="Pujic P."/>
            <person name="Rawnsley T."/>
            <person name="Rouy Z."/>
            <person name="Schenowitz C."/>
            <person name="Sellstedt A."/>
            <person name="Tavares F."/>
            <person name="Tomkins J.P."/>
            <person name="Vallenet D."/>
            <person name="Valverde C."/>
            <person name="Wall L.G."/>
            <person name="Wang Y."/>
            <person name="Medigue C."/>
            <person name="Benson D.R."/>
        </authorList>
    </citation>
    <scope>NUCLEOTIDE SEQUENCE [LARGE SCALE GENOMIC DNA]</scope>
    <source>
        <strain>EAN1pec</strain>
    </source>
</reference>
<sequence length="880" mass="94942">MDTAEIRRRFLNHFSERGHTVVPSASLVAQDPTLLLVNAGMVPFKPYFLGDLKAPWNRATSVQKCVRTVDIDNVGRTARHASFFQMCGNFSFGDYFKAEAIPFAFELIVDGYGFNPDDLWATVYLDDDEAEAIWRTLLPAERIQRRGKKDNFWSMGVPGPCGPCSEIYFDRGPAYGREGGPEADEDRYLEIWNLVFMQFARGEGSEYGYEIVGDLPARNIDTGMGLERMATILQGVENLYEIDISRPVLDAAGRLTGTRYGADPDSDVRLRVVADHTRTAAMLISDGVSPSNEGRGYVLRRMLRRAVRDARLLGAREPVMDELFGVVRAAMGPIYPELVDQAEAITAVAVAEETAFLETLRTGTTLFDTAVTQARSSGSSQLSGESAFRLHDTYGFPIDLTMDMAADAGLTVDEAGFRRLMERQRQAAKADRASRRIGNLDLSAFRPILAASGPTTFTGYTELGRESGIVGIVGIGDGDSLTAAGEGEEVGILLDATPFYAESGGQEADLGRIRFDGGEAEVLDVQRPVPDLVMHRVKVLGGELRVGADVFAEVDVERRRAVSRSHTATHLVHTAFRRALGESATQAGSLNSPGRLRFDFHALGAVPDSVLADVEDEVNEIALRDLEVRWYVTSQEEARRLGAMALFGEKYGDRVRVVDVGDYARELCGGTHVASSAQLGAIKLLSESSISAGTRRVEALVGMDAFRFLAREHVLVSQLSSTLKARPDELADRVADIVGRLRDAEKELERLRAQAVLAGSAALAAGAEDVGGVALVTAQVPAGTPADDVRLLALDVRGRLAGRPAVVAVVEAAGAAVVVATDETARTRGLRAGDLVRHSWAALGGKGGGKPDVAQGGRGDADMIPKVFARLRELVADQSA</sequence>
<comment type="function">
    <text evidence="1">Catalyzes the attachment of alanine to tRNA(Ala) in a two-step reaction: alanine is first activated by ATP to form Ala-AMP and then transferred to the acceptor end of tRNA(Ala). Also edits incorrectly charged Ser-tRNA(Ala) and Gly-tRNA(Ala) via its editing domain.</text>
</comment>
<comment type="catalytic activity">
    <reaction evidence="1">
        <text>tRNA(Ala) + L-alanine + ATP = L-alanyl-tRNA(Ala) + AMP + diphosphate</text>
        <dbReference type="Rhea" id="RHEA:12540"/>
        <dbReference type="Rhea" id="RHEA-COMP:9657"/>
        <dbReference type="Rhea" id="RHEA-COMP:9923"/>
        <dbReference type="ChEBI" id="CHEBI:30616"/>
        <dbReference type="ChEBI" id="CHEBI:33019"/>
        <dbReference type="ChEBI" id="CHEBI:57972"/>
        <dbReference type="ChEBI" id="CHEBI:78442"/>
        <dbReference type="ChEBI" id="CHEBI:78497"/>
        <dbReference type="ChEBI" id="CHEBI:456215"/>
        <dbReference type="EC" id="6.1.1.7"/>
    </reaction>
</comment>
<comment type="cofactor">
    <cofactor evidence="1">
        <name>Zn(2+)</name>
        <dbReference type="ChEBI" id="CHEBI:29105"/>
    </cofactor>
    <text evidence="1">Binds 1 zinc ion per subunit.</text>
</comment>
<comment type="subcellular location">
    <subcellularLocation>
        <location evidence="1">Cytoplasm</location>
    </subcellularLocation>
</comment>
<comment type="domain">
    <text evidence="1">Consists of three domains; the N-terminal catalytic domain, the editing domain and the C-terminal C-Ala domain. The editing domain removes incorrectly charged amino acids, while the C-Ala domain, along with tRNA(Ala), serves as a bridge to cooperatively bring together the editing and aminoacylation centers thus stimulating deacylation of misacylated tRNAs.</text>
</comment>
<comment type="similarity">
    <text evidence="1">Belongs to the class-II aminoacyl-tRNA synthetase family.</text>
</comment>
<comment type="sequence caution" evidence="2">
    <conflict type="erroneous initiation">
        <sequence resource="EMBL-CDS" id="ABW11132"/>
    </conflict>
</comment>
<protein>
    <recommendedName>
        <fullName evidence="1">Alanine--tRNA ligase</fullName>
        <ecNumber evidence="1">6.1.1.7</ecNumber>
    </recommendedName>
    <alternativeName>
        <fullName evidence="1">Alanyl-tRNA synthetase</fullName>
        <shortName evidence="1">AlaRS</shortName>
    </alternativeName>
</protein>
<evidence type="ECO:0000255" key="1">
    <source>
        <dbReference type="HAMAP-Rule" id="MF_00036"/>
    </source>
</evidence>
<evidence type="ECO:0000305" key="2"/>
<gene>
    <name evidence="1" type="primary">alaS</name>
    <name type="ordered locus">Franean1_1694</name>
</gene>
<organism>
    <name type="scientific">Parafrankia sp. (strain EAN1pec)</name>
    <dbReference type="NCBI Taxonomy" id="298653"/>
    <lineage>
        <taxon>Bacteria</taxon>
        <taxon>Bacillati</taxon>
        <taxon>Actinomycetota</taxon>
        <taxon>Actinomycetes</taxon>
        <taxon>Frankiales</taxon>
        <taxon>Frankiaceae</taxon>
        <taxon>Parafrankia</taxon>
    </lineage>
</organism>
<dbReference type="EC" id="6.1.1.7" evidence="1"/>
<dbReference type="EMBL" id="CP000820">
    <property type="protein sequence ID" value="ABW11132.1"/>
    <property type="status" value="ALT_INIT"/>
    <property type="molecule type" value="Genomic_DNA"/>
</dbReference>
<dbReference type="RefSeq" id="WP_041253858.1">
    <property type="nucleotide sequence ID" value="NC_009921.1"/>
</dbReference>
<dbReference type="SMR" id="A8LCW4"/>
<dbReference type="STRING" id="298653.Franean1_1694"/>
<dbReference type="KEGG" id="fre:Franean1_1694"/>
<dbReference type="eggNOG" id="COG0013">
    <property type="taxonomic scope" value="Bacteria"/>
</dbReference>
<dbReference type="HOGENOM" id="CLU_004485_1_1_11"/>
<dbReference type="GO" id="GO:0005829">
    <property type="term" value="C:cytosol"/>
    <property type="evidence" value="ECO:0007669"/>
    <property type="project" value="TreeGrafter"/>
</dbReference>
<dbReference type="GO" id="GO:0004813">
    <property type="term" value="F:alanine-tRNA ligase activity"/>
    <property type="evidence" value="ECO:0007669"/>
    <property type="project" value="UniProtKB-UniRule"/>
</dbReference>
<dbReference type="GO" id="GO:0002161">
    <property type="term" value="F:aminoacyl-tRNA deacylase activity"/>
    <property type="evidence" value="ECO:0007669"/>
    <property type="project" value="TreeGrafter"/>
</dbReference>
<dbReference type="GO" id="GO:0005524">
    <property type="term" value="F:ATP binding"/>
    <property type="evidence" value="ECO:0007669"/>
    <property type="project" value="UniProtKB-UniRule"/>
</dbReference>
<dbReference type="GO" id="GO:0000049">
    <property type="term" value="F:tRNA binding"/>
    <property type="evidence" value="ECO:0007669"/>
    <property type="project" value="UniProtKB-KW"/>
</dbReference>
<dbReference type="GO" id="GO:0008270">
    <property type="term" value="F:zinc ion binding"/>
    <property type="evidence" value="ECO:0007669"/>
    <property type="project" value="UniProtKB-UniRule"/>
</dbReference>
<dbReference type="GO" id="GO:0006419">
    <property type="term" value="P:alanyl-tRNA aminoacylation"/>
    <property type="evidence" value="ECO:0007669"/>
    <property type="project" value="UniProtKB-UniRule"/>
</dbReference>
<dbReference type="CDD" id="cd00673">
    <property type="entry name" value="AlaRS_core"/>
    <property type="match status" value="1"/>
</dbReference>
<dbReference type="FunFam" id="3.10.310.40:FF:000001">
    <property type="entry name" value="Alanine--tRNA ligase"/>
    <property type="match status" value="1"/>
</dbReference>
<dbReference type="FunFam" id="3.30.54.20:FF:000001">
    <property type="entry name" value="Alanine--tRNA ligase"/>
    <property type="match status" value="1"/>
</dbReference>
<dbReference type="FunFam" id="3.30.930.10:FF:000004">
    <property type="entry name" value="Alanine--tRNA ligase"/>
    <property type="match status" value="1"/>
</dbReference>
<dbReference type="FunFam" id="3.30.980.10:FF:000004">
    <property type="entry name" value="Alanine--tRNA ligase, cytoplasmic"/>
    <property type="match status" value="1"/>
</dbReference>
<dbReference type="Gene3D" id="2.40.30.130">
    <property type="match status" value="1"/>
</dbReference>
<dbReference type="Gene3D" id="3.10.310.40">
    <property type="match status" value="1"/>
</dbReference>
<dbReference type="Gene3D" id="3.30.54.20">
    <property type="match status" value="1"/>
</dbReference>
<dbReference type="Gene3D" id="6.10.250.550">
    <property type="match status" value="1"/>
</dbReference>
<dbReference type="Gene3D" id="3.30.930.10">
    <property type="entry name" value="Bira Bifunctional Protein, Domain 2"/>
    <property type="match status" value="1"/>
</dbReference>
<dbReference type="Gene3D" id="3.30.980.10">
    <property type="entry name" value="Threonyl-trna Synthetase, Chain A, domain 2"/>
    <property type="match status" value="1"/>
</dbReference>
<dbReference type="HAMAP" id="MF_00036_B">
    <property type="entry name" value="Ala_tRNA_synth_B"/>
    <property type="match status" value="1"/>
</dbReference>
<dbReference type="InterPro" id="IPR045864">
    <property type="entry name" value="aa-tRNA-synth_II/BPL/LPL"/>
</dbReference>
<dbReference type="InterPro" id="IPR002318">
    <property type="entry name" value="Ala-tRNA-lgiase_IIc"/>
</dbReference>
<dbReference type="InterPro" id="IPR018162">
    <property type="entry name" value="Ala-tRNA-ligase_IIc_anticod-bd"/>
</dbReference>
<dbReference type="InterPro" id="IPR018165">
    <property type="entry name" value="Ala-tRNA-synth_IIc_core"/>
</dbReference>
<dbReference type="InterPro" id="IPR018164">
    <property type="entry name" value="Ala-tRNA-synth_IIc_N"/>
</dbReference>
<dbReference type="InterPro" id="IPR050058">
    <property type="entry name" value="Ala-tRNA_ligase"/>
</dbReference>
<dbReference type="InterPro" id="IPR023033">
    <property type="entry name" value="Ala_tRNA_ligase_euk/bac"/>
</dbReference>
<dbReference type="InterPro" id="IPR003156">
    <property type="entry name" value="DHHA1_dom"/>
</dbReference>
<dbReference type="InterPro" id="IPR018163">
    <property type="entry name" value="Thr/Ala-tRNA-synth_IIc_edit"/>
</dbReference>
<dbReference type="InterPro" id="IPR009000">
    <property type="entry name" value="Transl_B-barrel_sf"/>
</dbReference>
<dbReference type="InterPro" id="IPR012947">
    <property type="entry name" value="tRNA_SAD"/>
</dbReference>
<dbReference type="NCBIfam" id="TIGR00344">
    <property type="entry name" value="alaS"/>
    <property type="match status" value="1"/>
</dbReference>
<dbReference type="PANTHER" id="PTHR11777:SF9">
    <property type="entry name" value="ALANINE--TRNA LIGASE, CYTOPLASMIC"/>
    <property type="match status" value="1"/>
</dbReference>
<dbReference type="PANTHER" id="PTHR11777">
    <property type="entry name" value="ALANYL-TRNA SYNTHETASE"/>
    <property type="match status" value="1"/>
</dbReference>
<dbReference type="Pfam" id="PF02272">
    <property type="entry name" value="DHHA1"/>
    <property type="match status" value="1"/>
</dbReference>
<dbReference type="Pfam" id="PF01411">
    <property type="entry name" value="tRNA-synt_2c"/>
    <property type="match status" value="1"/>
</dbReference>
<dbReference type="Pfam" id="PF07973">
    <property type="entry name" value="tRNA_SAD"/>
    <property type="match status" value="1"/>
</dbReference>
<dbReference type="PRINTS" id="PR00980">
    <property type="entry name" value="TRNASYNTHALA"/>
</dbReference>
<dbReference type="SMART" id="SM00863">
    <property type="entry name" value="tRNA_SAD"/>
    <property type="match status" value="1"/>
</dbReference>
<dbReference type="SUPFAM" id="SSF55681">
    <property type="entry name" value="Class II aaRS and biotin synthetases"/>
    <property type="match status" value="1"/>
</dbReference>
<dbReference type="SUPFAM" id="SSF101353">
    <property type="entry name" value="Putative anticodon-binding domain of alanyl-tRNA synthetase (AlaRS)"/>
    <property type="match status" value="1"/>
</dbReference>
<dbReference type="SUPFAM" id="SSF55186">
    <property type="entry name" value="ThrRS/AlaRS common domain"/>
    <property type="match status" value="1"/>
</dbReference>
<dbReference type="SUPFAM" id="SSF50447">
    <property type="entry name" value="Translation proteins"/>
    <property type="match status" value="1"/>
</dbReference>
<dbReference type="PROSITE" id="PS50860">
    <property type="entry name" value="AA_TRNA_LIGASE_II_ALA"/>
    <property type="match status" value="1"/>
</dbReference>
<keyword id="KW-0030">Aminoacyl-tRNA synthetase</keyword>
<keyword id="KW-0067">ATP-binding</keyword>
<keyword id="KW-0963">Cytoplasm</keyword>
<keyword id="KW-0436">Ligase</keyword>
<keyword id="KW-0479">Metal-binding</keyword>
<keyword id="KW-0547">Nucleotide-binding</keyword>
<keyword id="KW-0648">Protein biosynthesis</keyword>
<keyword id="KW-0694">RNA-binding</keyword>
<keyword id="KW-0820">tRNA-binding</keyword>
<keyword id="KW-0862">Zinc</keyword>
<proteinExistence type="inferred from homology"/>